<gene>
    <name evidence="1" type="primary">ihfA</name>
    <name evidence="1" type="synonym">himA</name>
    <name type="ordered locus">Shewmr4_1810</name>
</gene>
<keyword id="KW-0233">DNA recombination</keyword>
<keyword id="KW-0238">DNA-binding</keyword>
<keyword id="KW-0804">Transcription</keyword>
<keyword id="KW-0805">Transcription regulation</keyword>
<keyword id="KW-0810">Translation regulation</keyword>
<proteinExistence type="inferred from homology"/>
<protein>
    <recommendedName>
        <fullName evidence="1">Integration host factor subunit alpha</fullName>
        <shortName evidence="1">IHF-alpha</shortName>
    </recommendedName>
</protein>
<accession>Q0HJ83</accession>
<sequence>MALTKAEMAEHLFETLGINKRVAKEMVESFFEEIRGALESGEQVKLSGFGNFDLRDKNQRPGRNPKTGEDIPISARRVVTFRPGQKLKTRVEASNAGK</sequence>
<name>IHFA_SHESM</name>
<dbReference type="EMBL" id="CP000446">
    <property type="protein sequence ID" value="ABI38884.1"/>
    <property type="molecule type" value="Genomic_DNA"/>
</dbReference>
<dbReference type="RefSeq" id="WP_011622581.1">
    <property type="nucleotide sequence ID" value="NC_008321.1"/>
</dbReference>
<dbReference type="SMR" id="Q0HJ83"/>
<dbReference type="GeneID" id="75188606"/>
<dbReference type="KEGG" id="she:Shewmr4_1810"/>
<dbReference type="HOGENOM" id="CLU_105066_1_3_6"/>
<dbReference type="GO" id="GO:0005829">
    <property type="term" value="C:cytosol"/>
    <property type="evidence" value="ECO:0007669"/>
    <property type="project" value="TreeGrafter"/>
</dbReference>
<dbReference type="GO" id="GO:0003677">
    <property type="term" value="F:DNA binding"/>
    <property type="evidence" value="ECO:0007669"/>
    <property type="project" value="UniProtKB-UniRule"/>
</dbReference>
<dbReference type="GO" id="GO:0030527">
    <property type="term" value="F:structural constituent of chromatin"/>
    <property type="evidence" value="ECO:0007669"/>
    <property type="project" value="InterPro"/>
</dbReference>
<dbReference type="GO" id="GO:0006310">
    <property type="term" value="P:DNA recombination"/>
    <property type="evidence" value="ECO:0007669"/>
    <property type="project" value="UniProtKB-UniRule"/>
</dbReference>
<dbReference type="GO" id="GO:0009893">
    <property type="term" value="P:positive regulation of metabolic process"/>
    <property type="evidence" value="ECO:0007669"/>
    <property type="project" value="UniProtKB-ARBA"/>
</dbReference>
<dbReference type="GO" id="GO:0006355">
    <property type="term" value="P:regulation of DNA-templated transcription"/>
    <property type="evidence" value="ECO:0007669"/>
    <property type="project" value="UniProtKB-UniRule"/>
</dbReference>
<dbReference type="GO" id="GO:0006417">
    <property type="term" value="P:regulation of translation"/>
    <property type="evidence" value="ECO:0007669"/>
    <property type="project" value="UniProtKB-UniRule"/>
</dbReference>
<dbReference type="CDD" id="cd13835">
    <property type="entry name" value="IHF_A"/>
    <property type="match status" value="1"/>
</dbReference>
<dbReference type="FunFam" id="4.10.520.10:FF:000002">
    <property type="entry name" value="Integration host factor subunit alpha"/>
    <property type="match status" value="1"/>
</dbReference>
<dbReference type="Gene3D" id="4.10.520.10">
    <property type="entry name" value="IHF-like DNA-binding proteins"/>
    <property type="match status" value="1"/>
</dbReference>
<dbReference type="HAMAP" id="MF_00380">
    <property type="entry name" value="IHF_alpha"/>
    <property type="match status" value="1"/>
</dbReference>
<dbReference type="InterPro" id="IPR000119">
    <property type="entry name" value="Hist_DNA-bd"/>
</dbReference>
<dbReference type="InterPro" id="IPR020816">
    <property type="entry name" value="Histone-like_DNA-bd_CS"/>
</dbReference>
<dbReference type="InterPro" id="IPR010992">
    <property type="entry name" value="IHF-like_DNA-bd_dom_sf"/>
</dbReference>
<dbReference type="InterPro" id="IPR005684">
    <property type="entry name" value="IHF_alpha"/>
</dbReference>
<dbReference type="NCBIfam" id="TIGR00987">
    <property type="entry name" value="himA"/>
    <property type="match status" value="1"/>
</dbReference>
<dbReference type="NCBIfam" id="NF001401">
    <property type="entry name" value="PRK00285.1"/>
    <property type="match status" value="1"/>
</dbReference>
<dbReference type="PANTHER" id="PTHR33175">
    <property type="entry name" value="DNA-BINDING PROTEIN HU"/>
    <property type="match status" value="1"/>
</dbReference>
<dbReference type="PANTHER" id="PTHR33175:SF2">
    <property type="entry name" value="INTEGRATION HOST FACTOR SUBUNIT ALPHA"/>
    <property type="match status" value="1"/>
</dbReference>
<dbReference type="Pfam" id="PF00216">
    <property type="entry name" value="Bac_DNA_binding"/>
    <property type="match status" value="1"/>
</dbReference>
<dbReference type="PRINTS" id="PR01727">
    <property type="entry name" value="DNABINDINGHU"/>
</dbReference>
<dbReference type="SMART" id="SM00411">
    <property type="entry name" value="BHL"/>
    <property type="match status" value="1"/>
</dbReference>
<dbReference type="SUPFAM" id="SSF47729">
    <property type="entry name" value="IHF-like DNA-binding proteins"/>
    <property type="match status" value="1"/>
</dbReference>
<dbReference type="PROSITE" id="PS00045">
    <property type="entry name" value="HISTONE_LIKE"/>
    <property type="match status" value="1"/>
</dbReference>
<feature type="chain" id="PRO_0000277776" description="Integration host factor subunit alpha">
    <location>
        <begin position="1"/>
        <end position="98"/>
    </location>
</feature>
<feature type="region of interest" description="Disordered" evidence="2">
    <location>
        <begin position="49"/>
        <end position="71"/>
    </location>
</feature>
<comment type="function">
    <text evidence="1">This protein is one of the two subunits of integration host factor, a specific DNA-binding protein that functions in genetic recombination as well as in transcriptional and translational control.</text>
</comment>
<comment type="subunit">
    <text evidence="1">Heterodimer of an alpha and a beta chain.</text>
</comment>
<comment type="similarity">
    <text evidence="1">Belongs to the bacterial histone-like protein family.</text>
</comment>
<organism>
    <name type="scientific">Shewanella sp. (strain MR-4)</name>
    <dbReference type="NCBI Taxonomy" id="60480"/>
    <lineage>
        <taxon>Bacteria</taxon>
        <taxon>Pseudomonadati</taxon>
        <taxon>Pseudomonadota</taxon>
        <taxon>Gammaproteobacteria</taxon>
        <taxon>Alteromonadales</taxon>
        <taxon>Shewanellaceae</taxon>
        <taxon>Shewanella</taxon>
    </lineage>
</organism>
<evidence type="ECO:0000255" key="1">
    <source>
        <dbReference type="HAMAP-Rule" id="MF_00380"/>
    </source>
</evidence>
<evidence type="ECO:0000256" key="2">
    <source>
        <dbReference type="SAM" id="MobiDB-lite"/>
    </source>
</evidence>
<reference key="1">
    <citation type="submission" date="2006-08" db="EMBL/GenBank/DDBJ databases">
        <title>Complete sequence of Shewanella sp. MR-4.</title>
        <authorList>
            <consortium name="US DOE Joint Genome Institute"/>
            <person name="Copeland A."/>
            <person name="Lucas S."/>
            <person name="Lapidus A."/>
            <person name="Barry K."/>
            <person name="Detter J.C."/>
            <person name="Glavina del Rio T."/>
            <person name="Hammon N."/>
            <person name="Israni S."/>
            <person name="Dalin E."/>
            <person name="Tice H."/>
            <person name="Pitluck S."/>
            <person name="Kiss H."/>
            <person name="Brettin T."/>
            <person name="Bruce D."/>
            <person name="Han C."/>
            <person name="Tapia R."/>
            <person name="Gilna P."/>
            <person name="Schmutz J."/>
            <person name="Larimer F."/>
            <person name="Land M."/>
            <person name="Hauser L."/>
            <person name="Kyrpides N."/>
            <person name="Mikhailova N."/>
            <person name="Nealson K."/>
            <person name="Konstantinidis K."/>
            <person name="Klappenbach J."/>
            <person name="Tiedje J."/>
            <person name="Richardson P."/>
        </authorList>
    </citation>
    <scope>NUCLEOTIDE SEQUENCE [LARGE SCALE GENOMIC DNA]</scope>
    <source>
        <strain>MR-4</strain>
    </source>
</reference>